<proteinExistence type="inferred from homology"/>
<accession>Q74ZD2</accession>
<organism>
    <name type="scientific">Eremothecium gossypii (strain ATCC 10895 / CBS 109.51 / FGSC 9923 / NRRL Y-1056)</name>
    <name type="common">Yeast</name>
    <name type="synonym">Ashbya gossypii</name>
    <dbReference type="NCBI Taxonomy" id="284811"/>
    <lineage>
        <taxon>Eukaryota</taxon>
        <taxon>Fungi</taxon>
        <taxon>Dikarya</taxon>
        <taxon>Ascomycota</taxon>
        <taxon>Saccharomycotina</taxon>
        <taxon>Saccharomycetes</taxon>
        <taxon>Saccharomycetales</taxon>
        <taxon>Saccharomycetaceae</taxon>
        <taxon>Eremothecium</taxon>
    </lineage>
</organism>
<keyword id="KW-0175">Coiled coil</keyword>
<keyword id="KW-0256">Endoplasmic reticulum</keyword>
<keyword id="KW-0931">ER-Golgi transport</keyword>
<keyword id="KW-0333">Golgi apparatus</keyword>
<keyword id="KW-0472">Membrane</keyword>
<keyword id="KW-0653">Protein transport</keyword>
<keyword id="KW-1185">Reference proteome</keyword>
<keyword id="KW-0812">Transmembrane</keyword>
<keyword id="KW-1133">Transmembrane helix</keyword>
<keyword id="KW-0813">Transport</keyword>
<feature type="chain" id="PRO_0000206764" description="Protein transport protein SEC22">
    <location>
        <begin position="1"/>
        <end position="214"/>
    </location>
</feature>
<feature type="topological domain" description="Cytoplasmic" evidence="2">
    <location>
        <begin position="1"/>
        <end position="192"/>
    </location>
</feature>
<feature type="transmembrane region" description="Helical; Anchor for type IV membrane protein" evidence="2">
    <location>
        <begin position="193"/>
        <end position="213"/>
    </location>
</feature>
<feature type="topological domain" description="Vesicular" evidence="2">
    <location>
        <position position="214"/>
    </location>
</feature>
<feature type="domain" description="Longin" evidence="3">
    <location>
        <begin position="6"/>
        <end position="117"/>
    </location>
</feature>
<feature type="domain" description="v-SNARE coiled-coil homology" evidence="4">
    <location>
        <begin position="132"/>
        <end position="192"/>
    </location>
</feature>
<gene>
    <name type="primary">SEC22</name>
    <name type="ordered locus">AGR267W</name>
</gene>
<name>SEC22_EREGS</name>
<protein>
    <recommendedName>
        <fullName>Protein transport protein SEC22</fullName>
    </recommendedName>
</protein>
<evidence type="ECO:0000250" key="1"/>
<evidence type="ECO:0000255" key="2"/>
<evidence type="ECO:0000255" key="3">
    <source>
        <dbReference type="PROSITE-ProRule" id="PRU00231"/>
    </source>
</evidence>
<evidence type="ECO:0000255" key="4">
    <source>
        <dbReference type="PROSITE-ProRule" id="PRU00290"/>
    </source>
</evidence>
<evidence type="ECO:0000305" key="5"/>
<comment type="function">
    <text evidence="1">Required for transport from the ER to the Golgi complex.</text>
</comment>
<comment type="subcellular location">
    <subcellularLocation>
        <location evidence="5">Membrane</location>
        <topology evidence="5">Single-pass type IV membrane protein</topology>
    </subcellularLocation>
    <subcellularLocation>
        <location evidence="5">Endoplasmic reticulum membrane</location>
        <topology evidence="5">Single-pass type IV membrane protein</topology>
    </subcellularLocation>
    <subcellularLocation>
        <location evidence="5">Golgi apparatus membrane</location>
        <topology evidence="5">Single-pass type IV membrane protein</topology>
    </subcellularLocation>
</comment>
<comment type="similarity">
    <text evidence="5">Belongs to the synaptobrevin family.</text>
</comment>
<reference key="1">
    <citation type="journal article" date="2004" name="Science">
        <title>The Ashbya gossypii genome as a tool for mapping the ancient Saccharomyces cerevisiae genome.</title>
        <authorList>
            <person name="Dietrich F.S."/>
            <person name="Voegeli S."/>
            <person name="Brachat S."/>
            <person name="Lerch A."/>
            <person name="Gates K."/>
            <person name="Steiner S."/>
            <person name="Mohr C."/>
            <person name="Poehlmann R."/>
            <person name="Luedi P."/>
            <person name="Choi S."/>
            <person name="Wing R.A."/>
            <person name="Flavier A."/>
            <person name="Gaffney T.D."/>
            <person name="Philippsen P."/>
        </authorList>
    </citation>
    <scope>NUCLEOTIDE SEQUENCE [LARGE SCALE GENOMIC DNA]</scope>
    <source>
        <strain>ATCC 10895 / CBS 109.51 / FGSC 9923 / NRRL Y-1056</strain>
    </source>
</reference>
<reference key="2">
    <citation type="journal article" date="2013" name="G3 (Bethesda)">
        <title>Genomes of Ashbya fungi isolated from insects reveal four mating-type loci, numerous translocations, lack of transposons, and distinct gene duplications.</title>
        <authorList>
            <person name="Dietrich F.S."/>
            <person name="Voegeli S."/>
            <person name="Kuo S."/>
            <person name="Philippsen P."/>
        </authorList>
    </citation>
    <scope>GENOME REANNOTATION</scope>
    <scope>SEQUENCE REVISION TO 87</scope>
    <source>
        <strain>ATCC 10895 / CBS 109.51 / FGSC 9923 / NRRL Y-1056</strain>
    </source>
</reference>
<dbReference type="EMBL" id="AE016820">
    <property type="protein sequence ID" value="AAS54757.2"/>
    <property type="molecule type" value="Genomic_DNA"/>
</dbReference>
<dbReference type="RefSeq" id="NP_986933.2">
    <property type="nucleotide sequence ID" value="NM_211995.2"/>
</dbReference>
<dbReference type="SMR" id="Q74ZD2"/>
<dbReference type="FunCoup" id="Q74ZD2">
    <property type="interactions" value="1087"/>
</dbReference>
<dbReference type="STRING" id="284811.Q74ZD2"/>
<dbReference type="EnsemblFungi" id="AAS54757">
    <property type="protein sequence ID" value="AAS54757"/>
    <property type="gene ID" value="AGOS_AGR267W"/>
</dbReference>
<dbReference type="GeneID" id="4623235"/>
<dbReference type="KEGG" id="ago:AGOS_AGR267W"/>
<dbReference type="eggNOG" id="KOG0862">
    <property type="taxonomic scope" value="Eukaryota"/>
</dbReference>
<dbReference type="HOGENOM" id="CLU_054453_4_0_1"/>
<dbReference type="InParanoid" id="Q74ZD2"/>
<dbReference type="OMA" id="FIYWRFF"/>
<dbReference type="OrthoDB" id="1719357at2759"/>
<dbReference type="Proteomes" id="UP000000591">
    <property type="component" value="Chromosome VII"/>
</dbReference>
<dbReference type="GO" id="GO:0005789">
    <property type="term" value="C:endoplasmic reticulum membrane"/>
    <property type="evidence" value="ECO:0000318"/>
    <property type="project" value="GO_Central"/>
</dbReference>
<dbReference type="GO" id="GO:0012507">
    <property type="term" value="C:ER to Golgi transport vesicle membrane"/>
    <property type="evidence" value="ECO:0000318"/>
    <property type="project" value="GO_Central"/>
</dbReference>
<dbReference type="GO" id="GO:0000139">
    <property type="term" value="C:Golgi membrane"/>
    <property type="evidence" value="ECO:0000318"/>
    <property type="project" value="GO_Central"/>
</dbReference>
<dbReference type="GO" id="GO:0031201">
    <property type="term" value="C:SNARE complex"/>
    <property type="evidence" value="ECO:0000318"/>
    <property type="project" value="GO_Central"/>
</dbReference>
<dbReference type="GO" id="GO:0005484">
    <property type="term" value="F:SNAP receptor activity"/>
    <property type="evidence" value="ECO:0000318"/>
    <property type="project" value="GO_Central"/>
</dbReference>
<dbReference type="GO" id="GO:0006888">
    <property type="term" value="P:endoplasmic reticulum to Golgi vesicle-mediated transport"/>
    <property type="evidence" value="ECO:0000318"/>
    <property type="project" value="GO_Central"/>
</dbReference>
<dbReference type="GO" id="GO:0006886">
    <property type="term" value="P:intracellular protein transport"/>
    <property type="evidence" value="ECO:0007669"/>
    <property type="project" value="EnsemblFungi"/>
</dbReference>
<dbReference type="GO" id="GO:0006890">
    <property type="term" value="P:retrograde vesicle-mediated transport, Golgi to endoplasmic reticulum"/>
    <property type="evidence" value="ECO:0000318"/>
    <property type="project" value="GO_Central"/>
</dbReference>
<dbReference type="GO" id="GO:0048280">
    <property type="term" value="P:vesicle fusion with Golgi apparatus"/>
    <property type="evidence" value="ECO:0000318"/>
    <property type="project" value="GO_Central"/>
</dbReference>
<dbReference type="CDD" id="cd14824">
    <property type="entry name" value="Longin"/>
    <property type="match status" value="1"/>
</dbReference>
<dbReference type="CDD" id="cd15866">
    <property type="entry name" value="R-SNARE_SEC22"/>
    <property type="match status" value="1"/>
</dbReference>
<dbReference type="FunFam" id="1.20.5.110:FF:000065">
    <property type="entry name" value="SEC22 (YLR268W)"/>
    <property type="match status" value="1"/>
</dbReference>
<dbReference type="FunFam" id="3.30.450.50:FF:000007">
    <property type="entry name" value="SNARE complex subunit SEC22"/>
    <property type="match status" value="1"/>
</dbReference>
<dbReference type="Gene3D" id="1.20.5.110">
    <property type="match status" value="1"/>
</dbReference>
<dbReference type="Gene3D" id="3.30.450.50">
    <property type="entry name" value="Longin domain"/>
    <property type="match status" value="1"/>
</dbReference>
<dbReference type="InterPro" id="IPR011012">
    <property type="entry name" value="Longin-like_dom_sf"/>
</dbReference>
<dbReference type="InterPro" id="IPR010908">
    <property type="entry name" value="Longin_dom"/>
</dbReference>
<dbReference type="InterPro" id="IPR044565">
    <property type="entry name" value="Sec22"/>
</dbReference>
<dbReference type="InterPro" id="IPR042855">
    <property type="entry name" value="V_SNARE_CC"/>
</dbReference>
<dbReference type="PANTHER" id="PTHR45837">
    <property type="entry name" value="VESICLE-TRAFFICKING PROTEIN SEC22B"/>
    <property type="match status" value="1"/>
</dbReference>
<dbReference type="Pfam" id="PF13774">
    <property type="entry name" value="Longin"/>
    <property type="match status" value="1"/>
</dbReference>
<dbReference type="Pfam" id="PF00957">
    <property type="entry name" value="Synaptobrevin"/>
    <property type="match status" value="1"/>
</dbReference>
<dbReference type="SMART" id="SM01270">
    <property type="entry name" value="Longin"/>
    <property type="match status" value="1"/>
</dbReference>
<dbReference type="SUPFAM" id="SSF58038">
    <property type="entry name" value="SNARE fusion complex"/>
    <property type="match status" value="1"/>
</dbReference>
<dbReference type="SUPFAM" id="SSF64356">
    <property type="entry name" value="SNARE-like"/>
    <property type="match status" value="1"/>
</dbReference>
<dbReference type="PROSITE" id="PS50859">
    <property type="entry name" value="LONGIN"/>
    <property type="match status" value="1"/>
</dbReference>
<dbReference type="PROSITE" id="PS50892">
    <property type="entry name" value="V_SNARE"/>
    <property type="match status" value="1"/>
</dbReference>
<sequence>MIKSTLIFRDDGLPLCSSVDDDTDPSLADQKKKVKVLISRFTPQSANEATLESGAYEMHYVRQQSVVYIVIVERGYPRNLAFAYLADVRHEFEHSYGNEYVKPSVRPYAFVSFDNFLQKTKKIYNDKRVQGNLDQLNSDLLGVKQIMTKNIEDLLYRGDSLDRMSDLSASLRQDSKKYRRSAQKINFDLLLSQYAPVALIGLFFLFLVWWLVFR</sequence>